<sequence length="230" mass="25195">MTAIAPVITVDGPSGAGKGTLCKALAESLNWRLLDSGAIYRVLALAALHHQVDISTEEALVPLAAHLDVRFVSQNGQLQVILEGEDVSNEIRTETVGNTASQAAAFPRVREALLRRQRAFREAPGLIADGRDMGTIVFPDAPVKIFLDASSQERAHRRMLQLQERGFNVNFERLLAEIQERDNRDRNRSVAPLVPAADALVLDSTSMSIEQVIEQALAYAQRILALPLKK</sequence>
<reference key="1">
    <citation type="submission" date="2008-04" db="EMBL/GenBank/DDBJ databases">
        <title>Complete sequence of Yersinia pseudotuberculosis PB1/+.</title>
        <authorList>
            <person name="Copeland A."/>
            <person name="Lucas S."/>
            <person name="Lapidus A."/>
            <person name="Glavina del Rio T."/>
            <person name="Dalin E."/>
            <person name="Tice H."/>
            <person name="Bruce D."/>
            <person name="Goodwin L."/>
            <person name="Pitluck S."/>
            <person name="Munk A.C."/>
            <person name="Brettin T."/>
            <person name="Detter J.C."/>
            <person name="Han C."/>
            <person name="Tapia R."/>
            <person name="Schmutz J."/>
            <person name="Larimer F."/>
            <person name="Land M."/>
            <person name="Hauser L."/>
            <person name="Challacombe J.F."/>
            <person name="Green L."/>
            <person name="Lindler L.E."/>
            <person name="Nikolich M.P."/>
            <person name="Richardson P."/>
        </authorList>
    </citation>
    <scope>NUCLEOTIDE SEQUENCE [LARGE SCALE GENOMIC DNA]</scope>
    <source>
        <strain>PB1/+</strain>
    </source>
</reference>
<feature type="chain" id="PRO_1000100705" description="Cytidylate kinase">
    <location>
        <begin position="1"/>
        <end position="230"/>
    </location>
</feature>
<feature type="binding site" evidence="1">
    <location>
        <begin position="12"/>
        <end position="20"/>
    </location>
    <ligand>
        <name>ATP</name>
        <dbReference type="ChEBI" id="CHEBI:30616"/>
    </ligand>
</feature>
<keyword id="KW-0067">ATP-binding</keyword>
<keyword id="KW-0963">Cytoplasm</keyword>
<keyword id="KW-0418">Kinase</keyword>
<keyword id="KW-0547">Nucleotide-binding</keyword>
<keyword id="KW-0808">Transferase</keyword>
<organism>
    <name type="scientific">Yersinia pseudotuberculosis serotype IB (strain PB1/+)</name>
    <dbReference type="NCBI Taxonomy" id="502801"/>
    <lineage>
        <taxon>Bacteria</taxon>
        <taxon>Pseudomonadati</taxon>
        <taxon>Pseudomonadota</taxon>
        <taxon>Gammaproteobacteria</taxon>
        <taxon>Enterobacterales</taxon>
        <taxon>Yersiniaceae</taxon>
        <taxon>Yersinia</taxon>
    </lineage>
</organism>
<protein>
    <recommendedName>
        <fullName evidence="1">Cytidylate kinase</fullName>
        <shortName evidence="1">CK</shortName>
        <ecNumber evidence="1">2.7.4.25</ecNumber>
    </recommendedName>
    <alternativeName>
        <fullName evidence="1">Cytidine monophosphate kinase</fullName>
        <shortName evidence="1">CMP kinase</shortName>
    </alternativeName>
</protein>
<proteinExistence type="inferred from homology"/>
<gene>
    <name evidence="1" type="primary">cmk</name>
    <name type="ordered locus">YPTS_1517</name>
</gene>
<comment type="catalytic activity">
    <reaction evidence="1">
        <text>CMP + ATP = CDP + ADP</text>
        <dbReference type="Rhea" id="RHEA:11600"/>
        <dbReference type="ChEBI" id="CHEBI:30616"/>
        <dbReference type="ChEBI" id="CHEBI:58069"/>
        <dbReference type="ChEBI" id="CHEBI:60377"/>
        <dbReference type="ChEBI" id="CHEBI:456216"/>
        <dbReference type="EC" id="2.7.4.25"/>
    </reaction>
</comment>
<comment type="catalytic activity">
    <reaction evidence="1">
        <text>dCMP + ATP = dCDP + ADP</text>
        <dbReference type="Rhea" id="RHEA:25094"/>
        <dbReference type="ChEBI" id="CHEBI:30616"/>
        <dbReference type="ChEBI" id="CHEBI:57566"/>
        <dbReference type="ChEBI" id="CHEBI:58593"/>
        <dbReference type="ChEBI" id="CHEBI:456216"/>
        <dbReference type="EC" id="2.7.4.25"/>
    </reaction>
</comment>
<comment type="subcellular location">
    <subcellularLocation>
        <location evidence="1">Cytoplasm</location>
    </subcellularLocation>
</comment>
<comment type="similarity">
    <text evidence="1">Belongs to the cytidylate kinase family. Type 1 subfamily.</text>
</comment>
<dbReference type="EC" id="2.7.4.25" evidence="1"/>
<dbReference type="EMBL" id="CP001048">
    <property type="protein sequence ID" value="ACC88489.1"/>
    <property type="molecule type" value="Genomic_DNA"/>
</dbReference>
<dbReference type="RefSeq" id="WP_002211324.1">
    <property type="nucleotide sequence ID" value="NZ_CP009780.1"/>
</dbReference>
<dbReference type="SMR" id="B2KA24"/>
<dbReference type="GeneID" id="57977187"/>
<dbReference type="KEGG" id="ypb:YPTS_1517"/>
<dbReference type="PATRIC" id="fig|502801.10.peg.882"/>
<dbReference type="GO" id="GO:0005829">
    <property type="term" value="C:cytosol"/>
    <property type="evidence" value="ECO:0007669"/>
    <property type="project" value="TreeGrafter"/>
</dbReference>
<dbReference type="GO" id="GO:0005524">
    <property type="term" value="F:ATP binding"/>
    <property type="evidence" value="ECO:0007669"/>
    <property type="project" value="UniProtKB-UniRule"/>
</dbReference>
<dbReference type="GO" id="GO:0036430">
    <property type="term" value="F:CMP kinase activity"/>
    <property type="evidence" value="ECO:0007669"/>
    <property type="project" value="RHEA"/>
</dbReference>
<dbReference type="GO" id="GO:0036431">
    <property type="term" value="F:dCMP kinase activity"/>
    <property type="evidence" value="ECO:0007669"/>
    <property type="project" value="RHEA"/>
</dbReference>
<dbReference type="GO" id="GO:0015949">
    <property type="term" value="P:nucleobase-containing small molecule interconversion"/>
    <property type="evidence" value="ECO:0007669"/>
    <property type="project" value="TreeGrafter"/>
</dbReference>
<dbReference type="GO" id="GO:0006220">
    <property type="term" value="P:pyrimidine nucleotide metabolic process"/>
    <property type="evidence" value="ECO:0007669"/>
    <property type="project" value="UniProtKB-UniRule"/>
</dbReference>
<dbReference type="CDD" id="cd02020">
    <property type="entry name" value="CMPK"/>
    <property type="match status" value="1"/>
</dbReference>
<dbReference type="FunFam" id="3.40.50.300:FF:000262">
    <property type="entry name" value="Cytidylate kinase"/>
    <property type="match status" value="1"/>
</dbReference>
<dbReference type="Gene3D" id="3.40.50.300">
    <property type="entry name" value="P-loop containing nucleotide triphosphate hydrolases"/>
    <property type="match status" value="1"/>
</dbReference>
<dbReference type="HAMAP" id="MF_00238">
    <property type="entry name" value="Cytidyl_kinase_type1"/>
    <property type="match status" value="1"/>
</dbReference>
<dbReference type="InterPro" id="IPR003136">
    <property type="entry name" value="Cytidylate_kin"/>
</dbReference>
<dbReference type="InterPro" id="IPR011994">
    <property type="entry name" value="Cytidylate_kinase_dom"/>
</dbReference>
<dbReference type="InterPro" id="IPR027417">
    <property type="entry name" value="P-loop_NTPase"/>
</dbReference>
<dbReference type="NCBIfam" id="TIGR00017">
    <property type="entry name" value="cmk"/>
    <property type="match status" value="1"/>
</dbReference>
<dbReference type="PANTHER" id="PTHR21299:SF2">
    <property type="entry name" value="CYTIDYLATE KINASE"/>
    <property type="match status" value="1"/>
</dbReference>
<dbReference type="PANTHER" id="PTHR21299">
    <property type="entry name" value="CYTIDYLATE KINASE/PANTOATE-BETA-ALANINE LIGASE"/>
    <property type="match status" value="1"/>
</dbReference>
<dbReference type="Pfam" id="PF02224">
    <property type="entry name" value="Cytidylate_kin"/>
    <property type="match status" value="1"/>
</dbReference>
<dbReference type="SUPFAM" id="SSF52540">
    <property type="entry name" value="P-loop containing nucleoside triphosphate hydrolases"/>
    <property type="match status" value="1"/>
</dbReference>
<evidence type="ECO:0000255" key="1">
    <source>
        <dbReference type="HAMAP-Rule" id="MF_00238"/>
    </source>
</evidence>
<accession>B2KA24</accession>
<name>KCY_YERPB</name>